<evidence type="ECO:0000255" key="1">
    <source>
        <dbReference type="HAMAP-Rule" id="MF_01414"/>
    </source>
</evidence>
<organism>
    <name type="scientific">Klebsiella aerogenes</name>
    <name type="common">Enterobacter aerogenes</name>
    <dbReference type="NCBI Taxonomy" id="548"/>
    <lineage>
        <taxon>Bacteria</taxon>
        <taxon>Pseudomonadati</taxon>
        <taxon>Pseudomonadota</taxon>
        <taxon>Gammaproteobacteria</taxon>
        <taxon>Enterobacterales</taxon>
        <taxon>Enterobacteriaceae</taxon>
        <taxon>Klebsiella/Raoultella group</taxon>
        <taxon>Klebsiella</taxon>
    </lineage>
</organism>
<name>KEFF_KLEAE</name>
<gene>
    <name evidence="1" type="primary">kefF</name>
</gene>
<sequence>MILIIYAHPYPQHSHANKRMLEQAGTLEGVEIRSLYQLYPDFNIDVAAEQAALARADLVIWQHPMQWYSVPPLLKLWMDKVLSHGWAYGHNGIALRGKSLMWAVTTGGGESHFDIGSFPGFPVLAQPLQATALYCGMKWLPPFAMHCTFICDDETLQAQARRYRQRLIDWQEAHQNG</sequence>
<reference key="1">
    <citation type="journal article" date="2000" name="J. Bacteriol.">
        <title>Identification of an ancillary protein, YabF, required for activity of the KefC glutathione-gated potassium efflux system in Escherichia coli.</title>
        <authorList>
            <person name="Miller S."/>
            <person name="Ness L.S."/>
            <person name="Wood C.M."/>
            <person name="Fox B.C."/>
            <person name="Booth I.R."/>
        </authorList>
    </citation>
    <scope>NUCLEOTIDE SEQUENCE [GENOMIC DNA]</scope>
</reference>
<keyword id="KW-0997">Cell inner membrane</keyword>
<keyword id="KW-1003">Cell membrane</keyword>
<keyword id="KW-0285">Flavoprotein</keyword>
<keyword id="KW-0288">FMN</keyword>
<keyword id="KW-0472">Membrane</keyword>
<keyword id="KW-0520">NAD</keyword>
<keyword id="KW-0560">Oxidoreductase</keyword>
<dbReference type="EC" id="1.6.5.2" evidence="1"/>
<dbReference type="EMBL" id="AJ242913">
    <property type="protein sequence ID" value="CAB44436.1"/>
    <property type="molecule type" value="Genomic_DNA"/>
</dbReference>
<dbReference type="SMR" id="Q9X755"/>
<dbReference type="STRING" id="548.EAG7_03295"/>
<dbReference type="GO" id="GO:0005886">
    <property type="term" value="C:plasma membrane"/>
    <property type="evidence" value="ECO:0007669"/>
    <property type="project" value="UniProtKB-SubCell"/>
</dbReference>
<dbReference type="GO" id="GO:0009055">
    <property type="term" value="F:electron transfer activity"/>
    <property type="evidence" value="ECO:0007669"/>
    <property type="project" value="TreeGrafter"/>
</dbReference>
<dbReference type="GO" id="GO:0010181">
    <property type="term" value="F:FMN binding"/>
    <property type="evidence" value="ECO:0007669"/>
    <property type="project" value="UniProtKB-UniRule"/>
</dbReference>
<dbReference type="GO" id="GO:0050136">
    <property type="term" value="F:NADH:ubiquinone reductase (non-electrogenic) activity"/>
    <property type="evidence" value="ECO:0007669"/>
    <property type="project" value="RHEA"/>
</dbReference>
<dbReference type="GO" id="GO:0008753">
    <property type="term" value="F:NADPH dehydrogenase (quinone) activity"/>
    <property type="evidence" value="ECO:0007669"/>
    <property type="project" value="RHEA"/>
</dbReference>
<dbReference type="GO" id="GO:1901381">
    <property type="term" value="P:positive regulation of potassium ion transmembrane transport"/>
    <property type="evidence" value="ECO:0007669"/>
    <property type="project" value="UniProtKB-UniRule"/>
</dbReference>
<dbReference type="GO" id="GO:0006813">
    <property type="term" value="P:potassium ion transport"/>
    <property type="evidence" value="ECO:0007669"/>
    <property type="project" value="InterPro"/>
</dbReference>
<dbReference type="Gene3D" id="3.40.50.360">
    <property type="match status" value="1"/>
</dbReference>
<dbReference type="HAMAP" id="MF_01414">
    <property type="entry name" value="K_H_efflux_KefF"/>
    <property type="match status" value="1"/>
</dbReference>
<dbReference type="InterPro" id="IPR003680">
    <property type="entry name" value="Flavodoxin_fold"/>
</dbReference>
<dbReference type="InterPro" id="IPR029039">
    <property type="entry name" value="Flavoprotein-like_sf"/>
</dbReference>
<dbReference type="InterPro" id="IPR023948">
    <property type="entry name" value="K_H_efflux_KefF"/>
</dbReference>
<dbReference type="InterPro" id="IPR046980">
    <property type="entry name" value="KefG/KefF"/>
</dbReference>
<dbReference type="NCBIfam" id="NF002044">
    <property type="entry name" value="PRK00871.1"/>
    <property type="match status" value="1"/>
</dbReference>
<dbReference type="PANTHER" id="PTHR47307:SF2">
    <property type="entry name" value="GLUTATHIONE-REGULATED POTASSIUM-EFFLUX SYSTEM ANCILLARY PROTEIN KEFF"/>
    <property type="match status" value="1"/>
</dbReference>
<dbReference type="PANTHER" id="PTHR47307">
    <property type="entry name" value="GLUTATHIONE-REGULATED POTASSIUM-EFFLUX SYSTEM ANCILLARY PROTEIN KEFG"/>
    <property type="match status" value="1"/>
</dbReference>
<dbReference type="Pfam" id="PF02525">
    <property type="entry name" value="Flavodoxin_2"/>
    <property type="match status" value="1"/>
</dbReference>
<dbReference type="SUPFAM" id="SSF52218">
    <property type="entry name" value="Flavoproteins"/>
    <property type="match status" value="1"/>
</dbReference>
<comment type="function">
    <text evidence="1">Regulatory subunit of a potassium efflux system that confers protection against electrophiles. Required for full activity of KefC. Shows redox enzymatic activity, but this enzymatic activity is not required for activation of KefC.</text>
</comment>
<comment type="catalytic activity">
    <reaction evidence="1">
        <text>a quinone + NADH + H(+) = a quinol + NAD(+)</text>
        <dbReference type="Rhea" id="RHEA:46160"/>
        <dbReference type="ChEBI" id="CHEBI:15378"/>
        <dbReference type="ChEBI" id="CHEBI:24646"/>
        <dbReference type="ChEBI" id="CHEBI:57540"/>
        <dbReference type="ChEBI" id="CHEBI:57945"/>
        <dbReference type="ChEBI" id="CHEBI:132124"/>
        <dbReference type="EC" id="1.6.5.2"/>
    </reaction>
</comment>
<comment type="catalytic activity">
    <reaction evidence="1">
        <text>a quinone + NADPH + H(+) = a quinol + NADP(+)</text>
        <dbReference type="Rhea" id="RHEA:46164"/>
        <dbReference type="ChEBI" id="CHEBI:15378"/>
        <dbReference type="ChEBI" id="CHEBI:24646"/>
        <dbReference type="ChEBI" id="CHEBI:57783"/>
        <dbReference type="ChEBI" id="CHEBI:58349"/>
        <dbReference type="ChEBI" id="CHEBI:132124"/>
        <dbReference type="EC" id="1.6.5.2"/>
    </reaction>
</comment>
<comment type="cofactor">
    <cofactor evidence="1">
        <name>FMN</name>
        <dbReference type="ChEBI" id="CHEBI:58210"/>
    </cofactor>
</comment>
<comment type="subunit">
    <text evidence="1">Homodimer. Interacts with KefC.</text>
</comment>
<comment type="subcellular location">
    <subcellularLocation>
        <location evidence="1">Cell inner membrane</location>
        <topology evidence="1">Peripheral membrane protein</topology>
        <orientation evidence="1">Cytoplasmic side</orientation>
    </subcellularLocation>
</comment>
<comment type="similarity">
    <text evidence="1">Belongs to the NAD(P)H dehydrogenase (quinone) family. KefF subfamily.</text>
</comment>
<accession>Q9X755</accession>
<protein>
    <recommendedName>
        <fullName evidence="1">Glutathione-regulated potassium-efflux system ancillary protein KefF</fullName>
    </recommendedName>
    <alternativeName>
        <fullName evidence="1">Quinone oxidoreductase KefF</fullName>
        <ecNumber evidence="1">1.6.5.2</ecNumber>
    </alternativeName>
</protein>
<feature type="chain" id="PRO_0000071638" description="Glutathione-regulated potassium-efflux system ancillary protein KefF">
    <location>
        <begin position="1"/>
        <end position="177"/>
    </location>
</feature>
<feature type="binding site" evidence="1">
    <location>
        <position position="8"/>
    </location>
    <ligand>
        <name>FMN</name>
        <dbReference type="ChEBI" id="CHEBI:58210"/>
    </ligand>
</feature>
<feature type="binding site" evidence="1">
    <location>
        <begin position="14"/>
        <end position="17"/>
    </location>
    <ligand>
        <name>FMN</name>
        <dbReference type="ChEBI" id="CHEBI:58210"/>
    </ligand>
</feature>
<feature type="binding site" evidence="1">
    <location>
        <begin position="65"/>
        <end position="68"/>
    </location>
    <ligand>
        <name>FMN</name>
        <dbReference type="ChEBI" id="CHEBI:58210"/>
    </ligand>
</feature>
<feature type="binding site" evidence="1">
    <location>
        <begin position="105"/>
        <end position="108"/>
    </location>
    <ligand>
        <name>FMN</name>
        <dbReference type="ChEBI" id="CHEBI:58210"/>
    </ligand>
</feature>
<proteinExistence type="inferred from homology"/>